<feature type="chain" id="PRO_0000125913" description="Alpha-crystallin B chain">
    <location>
        <begin position="1"/>
        <end position="175"/>
    </location>
</feature>
<feature type="domain" description="sHSP" evidence="5">
    <location>
        <begin position="56"/>
        <end position="164"/>
    </location>
</feature>
<feature type="region of interest" description="Disordered" evidence="6">
    <location>
        <begin position="142"/>
        <end position="175"/>
    </location>
</feature>
<feature type="binding site" evidence="1">
    <location>
        <position position="83"/>
    </location>
    <ligand>
        <name>Zn(2+)</name>
        <dbReference type="ChEBI" id="CHEBI:29105"/>
        <label>1</label>
    </ligand>
</feature>
<feature type="binding site" evidence="1">
    <location>
        <position position="104"/>
    </location>
    <ligand>
        <name>Zn(2+)</name>
        <dbReference type="ChEBI" id="CHEBI:29105"/>
        <label>2</label>
    </ligand>
</feature>
<feature type="binding site" evidence="1">
    <location>
        <position position="106"/>
    </location>
    <ligand>
        <name>Zn(2+)</name>
        <dbReference type="ChEBI" id="CHEBI:29105"/>
        <label>2</label>
    </ligand>
</feature>
<feature type="binding site" evidence="1">
    <location>
        <position position="111"/>
    </location>
    <ligand>
        <name>Zn(2+)</name>
        <dbReference type="ChEBI" id="CHEBI:29105"/>
        <label>1</label>
    </ligand>
</feature>
<feature type="binding site" evidence="1">
    <location>
        <position position="119"/>
    </location>
    <ligand>
        <name>Zn(2+)</name>
        <dbReference type="ChEBI" id="CHEBI:29105"/>
        <label>1</label>
    </ligand>
</feature>
<feature type="modified residue" description="N-acetylmethionine" evidence="2 10">
    <location>
        <position position="1"/>
    </location>
</feature>
<feature type="modified residue" description="Phosphoserine" evidence="2">
    <location>
        <position position="19"/>
    </location>
</feature>
<feature type="modified residue" description="Phosphoserine" evidence="2">
    <location>
        <position position="45"/>
    </location>
</feature>
<feature type="modified residue" description="Phosphoserine" evidence="12 13">
    <location>
        <position position="59"/>
    </location>
</feature>
<feature type="modified residue" description="N6-acetyllysine" evidence="3">
    <location>
        <position position="92"/>
    </location>
</feature>
<feature type="modified residue" description="N6-acetyllysine" evidence="3">
    <location>
        <position position="166"/>
    </location>
</feature>
<feature type="glycosylation site" id="CAR_000058" description="O-linked (GlcNAc) threonine" evidence="9">
    <location>
        <position position="170"/>
    </location>
</feature>
<evidence type="ECO:0000250" key="1"/>
<evidence type="ECO:0000250" key="2">
    <source>
        <dbReference type="UniProtKB" id="P02510"/>
    </source>
</evidence>
<evidence type="ECO:0000250" key="3">
    <source>
        <dbReference type="UniProtKB" id="P02511"/>
    </source>
</evidence>
<evidence type="ECO:0000250" key="4">
    <source>
        <dbReference type="UniProtKB" id="P23927"/>
    </source>
</evidence>
<evidence type="ECO:0000255" key="5">
    <source>
        <dbReference type="PROSITE-ProRule" id="PRU00285"/>
    </source>
</evidence>
<evidence type="ECO:0000256" key="6">
    <source>
        <dbReference type="SAM" id="MobiDB-lite"/>
    </source>
</evidence>
<evidence type="ECO:0000269" key="7">
    <source>
    </source>
</evidence>
<evidence type="ECO:0000269" key="8">
    <source>
    </source>
</evidence>
<evidence type="ECO:0000269" key="9">
    <source>
    </source>
</evidence>
<evidence type="ECO:0000305" key="10"/>
<evidence type="ECO:0000312" key="11">
    <source>
        <dbReference type="RGD" id="2414"/>
    </source>
</evidence>
<evidence type="ECO:0007744" key="12">
    <source>
    </source>
</evidence>
<evidence type="ECO:0007744" key="13">
    <source>
    </source>
</evidence>
<accession>P23928</accession>
<accession>Q6LDR2</accession>
<reference key="1">
    <citation type="journal article" date="1990" name="J. Biol. Chem.">
        <title>Multiple mRNAs of rat brain alpha-crystallin B chain result from alternative transcriptional initiation.</title>
        <authorList>
            <person name="Iwaki A."/>
            <person name="Iwaki T."/>
            <person name="Goldman J.E."/>
            <person name="Liem R.K."/>
        </authorList>
    </citation>
    <scope>NUCLEOTIDE SEQUENCE [MRNA]</scope>
</reference>
<reference key="2">
    <citation type="journal article" date="1991" name="Eur. J. Biochem.">
        <title>Alpha B-crystallin exists as an independent protein in the heart and in the lens.</title>
        <authorList>
            <person name="Bhat S.P."/>
            <person name="Horwitz J."/>
            <person name="Srinivasan A.N."/>
            <person name="Ding L."/>
        </authorList>
    </citation>
    <scope>NUCLEOTIDE SEQUENCE [MRNA]</scope>
    <source>
        <strain>Sprague-Dawley</strain>
        <tissue>Heart</tissue>
        <tissue>Lens</tissue>
    </source>
</reference>
<reference key="3">
    <citation type="journal article" date="1991" name="Biochem. Biophys. Res. Commun.">
        <title>Early changes of alpha B-crystallin mRNA in rat skeletal muscle to mechanical tension and denervation.</title>
        <authorList>
            <person name="Atomi Y."/>
            <person name="Yamada S."/>
            <person name="Nishida T."/>
        </authorList>
    </citation>
    <scope>NUCLEOTIDE SEQUENCE [MRNA]</scope>
    <source>
        <tissue>Heart</tissue>
    </source>
</reference>
<reference key="4">
    <citation type="submission" date="1993-12" db="EMBL/GenBank/DDBJ databases">
        <authorList>
            <person name="Srinivasan A.N."/>
            <person name="Bhat S.P."/>
        </authorList>
    </citation>
    <scope>NUCLEOTIDE SEQUENCE [MRNA]</scope>
    <source>
        <strain>Wistar</strain>
        <tissue>Spleen</tissue>
    </source>
</reference>
<reference key="5">
    <citation type="journal article" date="1991" name="J. Biochem.">
        <title>Alpha B-crystallin in skeletal muscle: purification and localization.</title>
        <authorList>
            <person name="Atomi Y."/>
            <person name="Yamada S."/>
            <person name="Strohman R."/>
            <person name="Nonomura Y."/>
        </authorList>
    </citation>
    <scope>PARTIAL PROTEIN SEQUENCE</scope>
    <source>
        <strain>Wistar</strain>
        <tissue>Skeletal muscle</tissue>
    </source>
</reference>
<reference key="6">
    <citation type="journal article" date="1989" name="Biochem. Biophys. Res. Commun.">
        <title>Alpha-B subunit of lens-specific protein alpha-crystallin is present in other ocular and non-ocular tissues.</title>
        <authorList>
            <person name="Bhat S.P."/>
            <person name="Nagineni C.N."/>
        </authorList>
    </citation>
    <scope>NUCLEOTIDE SEQUENCE [MRNA] OF 140-175</scope>
    <source>
        <tissue>Heart</tissue>
    </source>
</reference>
<reference key="7">
    <citation type="journal article" date="1993" name="J. Biochem.">
        <title>Physiological and pathological changes in levels of the two small stress proteins, HSP27 and alpha B crystallin, in rat hindlimb muscles.</title>
        <authorList>
            <person name="Inaguma Y."/>
            <person name="Goto S."/>
            <person name="Shinohara H."/>
            <person name="Hasegawa K."/>
            <person name="Ohshima K."/>
            <person name="Kato K."/>
        </authorList>
    </citation>
    <scope>DEVELOPMENTAL STAGE</scope>
</reference>
<reference key="8">
    <citation type="journal article" date="1996" name="Biochemistry">
        <title>Dynamic O-GlcNAcylation of the small heat shock protein alpha B-crystallin.</title>
        <authorList>
            <person name="Roquemore E.P."/>
            <person name="Chevrier M.R."/>
            <person name="Cotter R.J."/>
            <person name="Hart G.W."/>
        </authorList>
    </citation>
    <scope>GLYCOSYLATION AT THR-170</scope>
</reference>
<reference key="9">
    <citation type="journal article" date="2000" name="J. Biol. Chem.">
        <title>Identification and characterization of a novel protein from Sertoli cells, PASS1, that associates with mammalian small stress protein hsp27.</title>
        <authorList>
            <person name="Liu C."/>
            <person name="Gilmont R.R."/>
            <person name="Benndorf R."/>
            <person name="Welsh M.J."/>
        </authorList>
    </citation>
    <scope>INTERACTION WITH HSPBAP1</scope>
</reference>
<reference key="10">
    <citation type="journal article" date="2006" name="Proc. Natl. Acad. Sci. U.S.A.">
        <title>Quantitative phosphoproteomics of vasopressin-sensitive renal cells: regulation of aquaporin-2 phosphorylation at two sites.</title>
        <authorList>
            <person name="Hoffert J.D."/>
            <person name="Pisitkun T."/>
            <person name="Wang G."/>
            <person name="Shen R.-F."/>
            <person name="Knepper M.A."/>
        </authorList>
    </citation>
    <scope>PHOSPHORYLATION [LARGE SCALE ANALYSIS] AT SER-59</scope>
    <scope>IDENTIFICATION BY MASS SPECTROMETRY [LARGE SCALE ANALYSIS]</scope>
</reference>
<reference key="11">
    <citation type="journal article" date="2012" name="Nat. Commun.">
        <title>Quantitative maps of protein phosphorylation sites across 14 different rat organs and tissues.</title>
        <authorList>
            <person name="Lundby A."/>
            <person name="Secher A."/>
            <person name="Lage K."/>
            <person name="Nordsborg N.B."/>
            <person name="Dmytriyev A."/>
            <person name="Lundby C."/>
            <person name="Olsen J.V."/>
        </authorList>
    </citation>
    <scope>PHOSPHORYLATION [LARGE SCALE ANALYSIS] AT SER-59</scope>
    <scope>IDENTIFICATION BY MASS SPECTROMETRY [LARGE SCALE ANALYSIS]</scope>
</reference>
<protein>
    <recommendedName>
        <fullName>Alpha-crystallin B chain</fullName>
    </recommendedName>
    <alternativeName>
        <fullName>Alpha(B)-crystallin</fullName>
    </alternativeName>
</protein>
<proteinExistence type="evidence at protein level"/>
<organism>
    <name type="scientific">Rattus norvegicus</name>
    <name type="common">Rat</name>
    <dbReference type="NCBI Taxonomy" id="10116"/>
    <lineage>
        <taxon>Eukaryota</taxon>
        <taxon>Metazoa</taxon>
        <taxon>Chordata</taxon>
        <taxon>Craniata</taxon>
        <taxon>Vertebrata</taxon>
        <taxon>Euteleostomi</taxon>
        <taxon>Mammalia</taxon>
        <taxon>Eutheria</taxon>
        <taxon>Euarchontoglires</taxon>
        <taxon>Glires</taxon>
        <taxon>Rodentia</taxon>
        <taxon>Myomorpha</taxon>
        <taxon>Muroidea</taxon>
        <taxon>Muridae</taxon>
        <taxon>Murinae</taxon>
        <taxon>Rattus</taxon>
    </lineage>
</organism>
<dbReference type="EMBL" id="S74229">
    <property type="protein sequence ID" value="AAB20759.1"/>
    <property type="molecule type" value="mRNA"/>
</dbReference>
<dbReference type="EMBL" id="S77138">
    <property type="protein sequence ID" value="AAP31995.1"/>
    <property type="molecule type" value="mRNA"/>
</dbReference>
<dbReference type="EMBL" id="M55534">
    <property type="protein sequence ID" value="AAA40977.1"/>
    <property type="molecule type" value="mRNA"/>
</dbReference>
<dbReference type="EMBL" id="X60352">
    <property type="protein sequence ID" value="CAA42911.1"/>
    <property type="status" value="ALT_INIT"/>
    <property type="molecule type" value="mRNA"/>
</dbReference>
<dbReference type="EMBL" id="X60351">
    <property type="protein sequence ID" value="CAA42910.1"/>
    <property type="molecule type" value="mRNA"/>
</dbReference>
<dbReference type="EMBL" id="S77142">
    <property type="status" value="NOT_ANNOTATED_CDS"/>
    <property type="molecule type" value="mRNA"/>
</dbReference>
<dbReference type="EMBL" id="U04320">
    <property type="protein sequence ID" value="AAA03655.1"/>
    <property type="molecule type" value="Unassigned_DNA"/>
</dbReference>
<dbReference type="EMBL" id="M24092">
    <property type="protein sequence ID" value="AAA40978.1"/>
    <property type="molecule type" value="mRNA"/>
</dbReference>
<dbReference type="PIR" id="A23681">
    <property type="entry name" value="A23681"/>
</dbReference>
<dbReference type="RefSeq" id="NP_037067.1">
    <property type="nucleotide sequence ID" value="NM_012935.4"/>
</dbReference>
<dbReference type="RefSeq" id="XP_038936806.1">
    <property type="nucleotide sequence ID" value="XM_039080878.2"/>
</dbReference>
<dbReference type="RefSeq" id="XP_038936807.1">
    <property type="nucleotide sequence ID" value="XM_039080879.2"/>
</dbReference>
<dbReference type="BMRB" id="P23928"/>
<dbReference type="SMR" id="P23928"/>
<dbReference type="BioGRID" id="247455">
    <property type="interactions" value="4"/>
</dbReference>
<dbReference type="FunCoup" id="P23928">
    <property type="interactions" value="288"/>
</dbReference>
<dbReference type="IntAct" id="P23928">
    <property type="interactions" value="4"/>
</dbReference>
<dbReference type="MINT" id="P23928"/>
<dbReference type="STRING" id="10116.ENSRNOP00000055901"/>
<dbReference type="GlyConnect" id="34">
    <property type="glycosylation" value="1 O-GlcNAc glycan"/>
</dbReference>
<dbReference type="GlyCosmos" id="P23928">
    <property type="glycosylation" value="1 site, 1 glycan"/>
</dbReference>
<dbReference type="GlyGen" id="P23928">
    <property type="glycosylation" value="2 sites, 1 O-linked glycan (2 sites)"/>
</dbReference>
<dbReference type="iPTMnet" id="P23928"/>
<dbReference type="PhosphoSitePlus" id="P23928"/>
<dbReference type="PaxDb" id="10116-ENSRNOP00000055901"/>
<dbReference type="Ensembl" id="ENSRNOT00000059127.4">
    <property type="protein sequence ID" value="ENSRNOP00000055901.2"/>
    <property type="gene ID" value="ENSRNOG00000010524.7"/>
</dbReference>
<dbReference type="GeneID" id="25420"/>
<dbReference type="KEGG" id="rno:25420"/>
<dbReference type="UCSC" id="RGD:2414">
    <property type="organism name" value="rat"/>
</dbReference>
<dbReference type="AGR" id="RGD:2414"/>
<dbReference type="CTD" id="1410"/>
<dbReference type="RGD" id="2414">
    <property type="gene designation" value="Cryab"/>
</dbReference>
<dbReference type="eggNOG" id="KOG3591">
    <property type="taxonomic scope" value="Eukaryota"/>
</dbReference>
<dbReference type="GeneTree" id="ENSGT00940000157434"/>
<dbReference type="HOGENOM" id="CLU_095001_2_0_1"/>
<dbReference type="InParanoid" id="P23928"/>
<dbReference type="OMA" id="FRDWWED"/>
<dbReference type="OrthoDB" id="1431247at2759"/>
<dbReference type="PhylomeDB" id="P23928"/>
<dbReference type="TreeFam" id="TF105049"/>
<dbReference type="Reactome" id="R-RNO-3371571">
    <property type="pathway name" value="HSF1-dependent transactivation"/>
</dbReference>
<dbReference type="PRO" id="PR:P23928"/>
<dbReference type="Proteomes" id="UP000002494">
    <property type="component" value="Chromosome 8"/>
</dbReference>
<dbReference type="Bgee" id="ENSRNOG00000010524">
    <property type="expression patterns" value="Expressed in heart and 20 other cell types or tissues"/>
</dbReference>
<dbReference type="GO" id="GO:0032432">
    <property type="term" value="C:actin filament bundle"/>
    <property type="evidence" value="ECO:0000314"/>
    <property type="project" value="RGD"/>
</dbReference>
<dbReference type="GO" id="GO:0030424">
    <property type="term" value="C:axon"/>
    <property type="evidence" value="ECO:0000314"/>
    <property type="project" value="RGD"/>
</dbReference>
<dbReference type="GO" id="GO:0097512">
    <property type="term" value="C:cardiac myofibril"/>
    <property type="evidence" value="ECO:0000314"/>
    <property type="project" value="RGD"/>
</dbReference>
<dbReference type="GO" id="GO:0009986">
    <property type="term" value="C:cell surface"/>
    <property type="evidence" value="ECO:0000314"/>
    <property type="project" value="RGD"/>
</dbReference>
<dbReference type="GO" id="GO:0043292">
    <property type="term" value="C:contractile muscle fiber"/>
    <property type="evidence" value="ECO:0000266"/>
    <property type="project" value="RGD"/>
</dbReference>
<dbReference type="GO" id="GO:0005737">
    <property type="term" value="C:cytoplasm"/>
    <property type="evidence" value="ECO:0000266"/>
    <property type="project" value="RGD"/>
</dbReference>
<dbReference type="GO" id="GO:0005829">
    <property type="term" value="C:cytosol"/>
    <property type="evidence" value="ECO:0000266"/>
    <property type="project" value="RGD"/>
</dbReference>
<dbReference type="GO" id="GO:0043197">
    <property type="term" value="C:dendritic spine"/>
    <property type="evidence" value="ECO:0000314"/>
    <property type="project" value="RGD"/>
</dbReference>
<dbReference type="GO" id="GO:0005576">
    <property type="term" value="C:extracellular region"/>
    <property type="evidence" value="ECO:0007669"/>
    <property type="project" value="UniProtKB-SubCell"/>
</dbReference>
<dbReference type="GO" id="GO:0031674">
    <property type="term" value="C:I band"/>
    <property type="evidence" value="ECO:0000314"/>
    <property type="project" value="RGD"/>
</dbReference>
<dbReference type="GO" id="GO:0005764">
    <property type="term" value="C:lysosome"/>
    <property type="evidence" value="ECO:0007669"/>
    <property type="project" value="UniProtKB-SubCell"/>
</dbReference>
<dbReference type="GO" id="GO:0031430">
    <property type="term" value="C:M band"/>
    <property type="evidence" value="ECO:0000314"/>
    <property type="project" value="RGD"/>
</dbReference>
<dbReference type="GO" id="GO:0005739">
    <property type="term" value="C:mitochondrion"/>
    <property type="evidence" value="ECO:0000266"/>
    <property type="project" value="RGD"/>
</dbReference>
<dbReference type="GO" id="GO:0005634">
    <property type="term" value="C:nucleus"/>
    <property type="evidence" value="ECO:0000250"/>
    <property type="project" value="UniProtKB"/>
</dbReference>
<dbReference type="GO" id="GO:0043204">
    <property type="term" value="C:perikaryon"/>
    <property type="evidence" value="ECO:0000314"/>
    <property type="project" value="RGD"/>
</dbReference>
<dbReference type="GO" id="GO:0005886">
    <property type="term" value="C:plasma membrane"/>
    <property type="evidence" value="ECO:0000266"/>
    <property type="project" value="RGD"/>
</dbReference>
<dbReference type="GO" id="GO:0032991">
    <property type="term" value="C:protein-containing complex"/>
    <property type="evidence" value="ECO:0000250"/>
    <property type="project" value="UniProtKB"/>
</dbReference>
<dbReference type="GO" id="GO:0097060">
    <property type="term" value="C:synaptic membrane"/>
    <property type="evidence" value="ECO:0000314"/>
    <property type="project" value="RGD"/>
</dbReference>
<dbReference type="GO" id="GO:0030018">
    <property type="term" value="C:Z disc"/>
    <property type="evidence" value="ECO:0000266"/>
    <property type="project" value="RGD"/>
</dbReference>
<dbReference type="GO" id="GO:0001540">
    <property type="term" value="F:amyloid-beta binding"/>
    <property type="evidence" value="ECO:0000266"/>
    <property type="project" value="RGD"/>
</dbReference>
<dbReference type="GO" id="GO:0008092">
    <property type="term" value="F:cytoskeletal protein binding"/>
    <property type="evidence" value="ECO:0000314"/>
    <property type="project" value="RGD"/>
</dbReference>
<dbReference type="GO" id="GO:0042802">
    <property type="term" value="F:identical protein binding"/>
    <property type="evidence" value="ECO:0000266"/>
    <property type="project" value="RGD"/>
</dbReference>
<dbReference type="GO" id="GO:0046872">
    <property type="term" value="F:metal ion binding"/>
    <property type="evidence" value="ECO:0007669"/>
    <property type="project" value="UniProtKB-KW"/>
</dbReference>
<dbReference type="GO" id="GO:0008017">
    <property type="term" value="F:microtubule binding"/>
    <property type="evidence" value="ECO:0000314"/>
    <property type="project" value="RGD"/>
</dbReference>
<dbReference type="GO" id="GO:0042803">
    <property type="term" value="F:protein homodimerization activity"/>
    <property type="evidence" value="ECO:0000250"/>
    <property type="project" value="UniProtKB"/>
</dbReference>
<dbReference type="GO" id="GO:0044877">
    <property type="term" value="F:protein-containing complex binding"/>
    <property type="evidence" value="ECO:0000266"/>
    <property type="project" value="RGD"/>
</dbReference>
<dbReference type="GO" id="GO:0005212">
    <property type="term" value="F:structural constituent of eye lens"/>
    <property type="evidence" value="ECO:0000304"/>
    <property type="project" value="RGD"/>
</dbReference>
<dbReference type="GO" id="GO:0005198">
    <property type="term" value="F:structural molecule activity"/>
    <property type="evidence" value="ECO:0000266"/>
    <property type="project" value="RGD"/>
</dbReference>
<dbReference type="GO" id="GO:0051082">
    <property type="term" value="F:unfolded protein binding"/>
    <property type="evidence" value="ECO:0000266"/>
    <property type="project" value="RGD"/>
</dbReference>
<dbReference type="GO" id="GO:0060561">
    <property type="term" value="P:apoptotic process involved in morphogenesis"/>
    <property type="evidence" value="ECO:0000266"/>
    <property type="project" value="RGD"/>
</dbReference>
<dbReference type="GO" id="GO:0043010">
    <property type="term" value="P:camera-type eye development"/>
    <property type="evidence" value="ECO:0000266"/>
    <property type="project" value="RGD"/>
</dbReference>
<dbReference type="GO" id="GO:0071480">
    <property type="term" value="P:cellular response to gamma radiation"/>
    <property type="evidence" value="ECO:0000266"/>
    <property type="project" value="RGD"/>
</dbReference>
<dbReference type="GO" id="GO:0002088">
    <property type="term" value="P:lens development in camera-type eye"/>
    <property type="evidence" value="ECO:0000266"/>
    <property type="project" value="RGD"/>
</dbReference>
<dbReference type="GO" id="GO:0031109">
    <property type="term" value="P:microtubule polymerization or depolymerization"/>
    <property type="evidence" value="ECO:0000315"/>
    <property type="project" value="RGD"/>
</dbReference>
<dbReference type="GO" id="GO:0007517">
    <property type="term" value="P:muscle organ development"/>
    <property type="evidence" value="ECO:0000266"/>
    <property type="project" value="RGD"/>
</dbReference>
<dbReference type="GO" id="GO:1905907">
    <property type="term" value="P:negative regulation of amyloid fibril formation"/>
    <property type="evidence" value="ECO:0000266"/>
    <property type="project" value="RGD"/>
</dbReference>
<dbReference type="GO" id="GO:0043066">
    <property type="term" value="P:negative regulation of apoptotic process"/>
    <property type="evidence" value="ECO:0000314"/>
    <property type="project" value="RGD"/>
</dbReference>
<dbReference type="GO" id="GO:0030308">
    <property type="term" value="P:negative regulation of cell growth"/>
    <property type="evidence" value="ECO:0000314"/>
    <property type="project" value="RGD"/>
</dbReference>
<dbReference type="GO" id="GO:0045892">
    <property type="term" value="P:negative regulation of DNA-templated transcription"/>
    <property type="evidence" value="ECO:0000250"/>
    <property type="project" value="UniProtKB"/>
</dbReference>
<dbReference type="GO" id="GO:0010629">
    <property type="term" value="P:negative regulation of gene expression"/>
    <property type="evidence" value="ECO:0000266"/>
    <property type="project" value="RGD"/>
</dbReference>
<dbReference type="GO" id="GO:0032387">
    <property type="term" value="P:negative regulation of intracellular transport"/>
    <property type="evidence" value="ECO:0000266"/>
    <property type="project" value="RGD"/>
</dbReference>
<dbReference type="GO" id="GO:0031333">
    <property type="term" value="P:negative regulation of protein-containing complex assembly"/>
    <property type="evidence" value="ECO:0000266"/>
    <property type="project" value="RGD"/>
</dbReference>
<dbReference type="GO" id="GO:2000378">
    <property type="term" value="P:negative regulation of reactive oxygen species metabolic process"/>
    <property type="evidence" value="ECO:0000314"/>
    <property type="project" value="RGD"/>
</dbReference>
<dbReference type="GO" id="GO:0006457">
    <property type="term" value="P:protein folding"/>
    <property type="evidence" value="ECO:0000314"/>
    <property type="project" value="RGD"/>
</dbReference>
<dbReference type="GO" id="GO:0042026">
    <property type="term" value="P:protein refolding"/>
    <property type="evidence" value="ECO:0000318"/>
    <property type="project" value="GO_Central"/>
</dbReference>
<dbReference type="GO" id="GO:0050821">
    <property type="term" value="P:protein stabilization"/>
    <property type="evidence" value="ECO:0000266"/>
    <property type="project" value="RGD"/>
</dbReference>
<dbReference type="GO" id="GO:0043067">
    <property type="term" value="P:regulation of programmed cell death"/>
    <property type="evidence" value="ECO:0000266"/>
    <property type="project" value="RGD"/>
</dbReference>
<dbReference type="GO" id="GO:0032355">
    <property type="term" value="P:response to estradiol"/>
    <property type="evidence" value="ECO:0000270"/>
    <property type="project" value="RGD"/>
</dbReference>
<dbReference type="GO" id="GO:0009408">
    <property type="term" value="P:response to heat"/>
    <property type="evidence" value="ECO:0000318"/>
    <property type="project" value="GO_Central"/>
</dbReference>
<dbReference type="GO" id="GO:0042542">
    <property type="term" value="P:response to hydrogen peroxide"/>
    <property type="evidence" value="ECO:0000270"/>
    <property type="project" value="RGD"/>
</dbReference>
<dbReference type="GO" id="GO:0001666">
    <property type="term" value="P:response to hypoxia"/>
    <property type="evidence" value="ECO:0000266"/>
    <property type="project" value="RGD"/>
</dbReference>
<dbReference type="GO" id="GO:0051403">
    <property type="term" value="P:stress-activated MAPK cascade"/>
    <property type="evidence" value="ECO:0000315"/>
    <property type="project" value="RGD"/>
</dbReference>
<dbReference type="GO" id="GO:0007021">
    <property type="term" value="P:tubulin complex assembly"/>
    <property type="evidence" value="ECO:0000266"/>
    <property type="project" value="RGD"/>
</dbReference>
<dbReference type="CDD" id="cd06498">
    <property type="entry name" value="ACD_alphaB-crystallin_HspB5"/>
    <property type="match status" value="1"/>
</dbReference>
<dbReference type="FunFam" id="2.60.40.790:FF:000011">
    <property type="entry name" value="Alpha-crystallin B chain"/>
    <property type="match status" value="1"/>
</dbReference>
<dbReference type="Gene3D" id="2.60.40.790">
    <property type="match status" value="1"/>
</dbReference>
<dbReference type="InterPro" id="IPR002068">
    <property type="entry name" value="A-crystallin/Hsp20_dom"/>
</dbReference>
<dbReference type="InterPro" id="IPR037882">
    <property type="entry name" value="ACD_alphaB-crystallin"/>
</dbReference>
<dbReference type="InterPro" id="IPR055269">
    <property type="entry name" value="Alpha-crystallin/HSP_16"/>
</dbReference>
<dbReference type="InterPro" id="IPR001436">
    <property type="entry name" value="Alpha-crystallin/sHSP_animal"/>
</dbReference>
<dbReference type="InterPro" id="IPR003090">
    <property type="entry name" value="Alpha-crystallin_N"/>
</dbReference>
<dbReference type="InterPro" id="IPR008978">
    <property type="entry name" value="HSP20-like_chaperone"/>
</dbReference>
<dbReference type="PANTHER" id="PTHR45640:SF5">
    <property type="entry name" value="ALPHA-CRYSTALLIN B CHAIN"/>
    <property type="match status" value="1"/>
</dbReference>
<dbReference type="PANTHER" id="PTHR45640">
    <property type="entry name" value="HEAT SHOCK PROTEIN HSP-12.2-RELATED"/>
    <property type="match status" value="1"/>
</dbReference>
<dbReference type="Pfam" id="PF00525">
    <property type="entry name" value="Crystallin"/>
    <property type="match status" value="1"/>
</dbReference>
<dbReference type="Pfam" id="PF00011">
    <property type="entry name" value="HSP20"/>
    <property type="match status" value="1"/>
</dbReference>
<dbReference type="PIRSF" id="PIRSF036514">
    <property type="entry name" value="Sm_HSP_B1"/>
    <property type="match status" value="1"/>
</dbReference>
<dbReference type="PRINTS" id="PR00299">
    <property type="entry name" value="ACRYSTALLIN"/>
</dbReference>
<dbReference type="SUPFAM" id="SSF49764">
    <property type="entry name" value="HSP20-like chaperones"/>
    <property type="match status" value="1"/>
</dbReference>
<dbReference type="PROSITE" id="PS01031">
    <property type="entry name" value="SHSP"/>
    <property type="match status" value="1"/>
</dbReference>
<gene>
    <name evidence="11" type="primary">Cryab</name>
</gene>
<comment type="function">
    <text evidence="4">May contribute to the transparency and refractive index of the lens. Has chaperone-like activity, preventing aggregation of various proteins under a wide range of stress conditions. In lens epithelial cells, stabilizes the ATP6V1A protein, preventing its degradation by the proteasome (By similarity).</text>
</comment>
<comment type="subunit">
    <text evidence="3 4 7">Heteromer composed of three CRYAA and one CRYAB subunits. Aggregates with homologous proteins, including the small heat shock protein HSPB1, to form large heteromeric complexes. Inter-subunit bridging via zinc ions enhances stability, which is crucial as there is no protein turn over in the lens (By similarity). Interacts with HSPBAP1 (PubMed:10751411). Interacts with TTN/titin. Interacts with TMEM109; in the cellular response to DNA damage. Interacts with DES; binds rapidly during early stages of DES filament assembly and a reduced binding seen in the later stages. Interacts with TMED10; the interaction mediates the translocation from the cytoplasm into the ERGIC (endoplasmic reticulum-Golgi intermediate compartment) and thereby secretion (By similarity). Interacts with ATP6V1A and with MTOR, forming a ternary complex (By similarity).</text>
</comment>
<comment type="interaction">
    <interactant intactId="EBI-916888">
        <id>P23928</id>
    </interactant>
    <interactant intactId="EBI-8520354">
        <id>Q9WVJ5</id>
        <label>Crybb1</label>
    </interactant>
    <organismsDiffer>true</organismsDiffer>
    <experiments>2</experiments>
</comment>
<comment type="subcellular location">
    <subcellularLocation>
        <location evidence="3">Cytoplasm</location>
    </subcellularLocation>
    <subcellularLocation>
        <location evidence="3">Nucleus</location>
    </subcellularLocation>
    <subcellularLocation>
        <location evidence="3">Secreted</location>
    </subcellularLocation>
    <subcellularLocation>
        <location evidence="4">Lysosome</location>
    </subcellularLocation>
    <text evidence="3">Translocates to the nucleus during heat shock and resides in sub-nuclear structures known as SC35 speckles or nuclear splicing speckles. Localizes at the Z-bands and the intercalated disk in cardiomyocytes. Can be secreted; the secretion is dependent on protein unfolding and facilitated by the cargo receptor TMED10; it results in protein translocation from the cytoplasm into the ERGIC (endoplasmic reticulum-Golgi intermediate compartment) followed by vesicle entry and secretion.</text>
</comment>
<comment type="tissue specificity">
    <text>Lens as well as other tissues.</text>
</comment>
<comment type="developmental stage">
    <text evidence="8">Levels are low in both the slow-twitch soleus and fast-twitch rectus femoris muscles at prenatal day 2, then increase slowly until postnatal day 3. At 2 weeks, levels in the rectus femoris muscle then decrease while those in the soleus muscle increase sharply, reaching adult levels by 4 weeks.</text>
</comment>
<comment type="similarity">
    <text evidence="5">Belongs to the small heat shock protein (HSP20) family.</text>
</comment>
<comment type="sequence caution" evidence="10">
    <conflict type="erroneous initiation">
        <sequence resource="EMBL-CDS" id="CAA42911"/>
    </conflict>
</comment>
<keyword id="KW-0007">Acetylation</keyword>
<keyword id="KW-0143">Chaperone</keyword>
<keyword id="KW-0963">Cytoplasm</keyword>
<keyword id="KW-0903">Direct protein sequencing</keyword>
<keyword id="KW-0273">Eye lens protein</keyword>
<keyword id="KW-0325">Glycoprotein</keyword>
<keyword id="KW-0458">Lysosome</keyword>
<keyword id="KW-0479">Metal-binding</keyword>
<keyword id="KW-0488">Methylation</keyword>
<keyword id="KW-0539">Nucleus</keyword>
<keyword id="KW-0597">Phosphoprotein</keyword>
<keyword id="KW-1185">Reference proteome</keyword>
<keyword id="KW-0964">Secreted</keyword>
<keyword id="KW-0862">Zinc</keyword>
<name>CRYAB_RAT</name>
<sequence length="175" mass="20089">MDIAIHHPWIRRPFFPFHSPSRLFDQFFGEHLLESDLFSTATSLSPFYLRPPSFLRAPSWIDTGLSEMRMEKDRFSVNLDVKHFSPEELKVKVLGDVIEVHGKHEERQDEHGFISREFHRKYRIPADVDPLTITSSLSSDGVLTVNGPRKQASGPERTIPITREEKPAVTAAPKK</sequence>